<name>ASM3A_HUMAN</name>
<dbReference type="EC" id="3.1.4.-" evidence="6"/>
<dbReference type="EC" id="3.6.1.15" evidence="3 4"/>
<dbReference type="EMBL" id="AK301365">
    <property type="protein sequence ID" value="BAH13465.1"/>
    <property type="molecule type" value="mRNA"/>
</dbReference>
<dbReference type="EMBL" id="AL732431">
    <property type="status" value="NOT_ANNOTATED_CDS"/>
    <property type="molecule type" value="Genomic_DNA"/>
</dbReference>
<dbReference type="EMBL" id="CH471051">
    <property type="protein sequence ID" value="EAW48164.1"/>
    <property type="molecule type" value="Genomic_DNA"/>
</dbReference>
<dbReference type="EMBL" id="BC018999">
    <property type="protein sequence ID" value="AAH18999.1"/>
    <property type="molecule type" value="mRNA"/>
</dbReference>
<dbReference type="EMBL" id="Y08136">
    <property type="protein sequence ID" value="CAA69330.1"/>
    <property type="molecule type" value="mRNA"/>
</dbReference>
<dbReference type="CCDS" id="CCDS5128.1">
    <molecule id="Q92484-1"/>
</dbReference>
<dbReference type="CCDS" id="CCDS69190.1">
    <molecule id="Q92484-2"/>
</dbReference>
<dbReference type="RefSeq" id="NP_001273067.1">
    <molecule id="Q92484-2"/>
    <property type="nucleotide sequence ID" value="NM_001286138.2"/>
</dbReference>
<dbReference type="RefSeq" id="NP_006705.1">
    <molecule id="Q92484-1"/>
    <property type="nucleotide sequence ID" value="NM_006714.5"/>
</dbReference>
<dbReference type="PDB" id="5EBB">
    <property type="method" value="X-ray"/>
    <property type="resolution" value="2.60 A"/>
    <property type="chains" value="A/B/C=34-443"/>
</dbReference>
<dbReference type="PDB" id="5EBE">
    <property type="method" value="X-ray"/>
    <property type="resolution" value="3.00 A"/>
    <property type="chains" value="A=33-450, B/C=33-447"/>
</dbReference>
<dbReference type="PDBsum" id="5EBB"/>
<dbReference type="PDBsum" id="5EBE"/>
<dbReference type="SMR" id="Q92484"/>
<dbReference type="BioGRID" id="116128">
    <property type="interactions" value="2"/>
</dbReference>
<dbReference type="FunCoup" id="Q92484">
    <property type="interactions" value="115"/>
</dbReference>
<dbReference type="IntAct" id="Q92484">
    <property type="interactions" value="3"/>
</dbReference>
<dbReference type="STRING" id="9606.ENSP00000357425"/>
<dbReference type="GlyConnect" id="987">
    <property type="glycosylation" value="3 N-Linked glycans (2 sites)"/>
</dbReference>
<dbReference type="GlyCosmos" id="Q92484">
    <property type="glycosylation" value="7 sites, 4 glycans"/>
</dbReference>
<dbReference type="GlyGen" id="Q92484">
    <property type="glycosylation" value="9 sites, 20 N-linked glycans (5 sites), 1 O-linked glycan (1 site)"/>
</dbReference>
<dbReference type="iPTMnet" id="Q92484"/>
<dbReference type="PhosphoSitePlus" id="Q92484"/>
<dbReference type="BioMuta" id="SMPDL3A"/>
<dbReference type="DMDM" id="39932730"/>
<dbReference type="jPOST" id="Q92484"/>
<dbReference type="MassIVE" id="Q92484"/>
<dbReference type="PaxDb" id="9606-ENSP00000357425"/>
<dbReference type="PeptideAtlas" id="Q92484"/>
<dbReference type="ProteomicsDB" id="6826"/>
<dbReference type="ProteomicsDB" id="75265">
    <molecule id="Q92484-1"/>
</dbReference>
<dbReference type="Pumba" id="Q92484"/>
<dbReference type="Antibodypedia" id="32649">
    <property type="antibodies" value="133 antibodies from 22 providers"/>
</dbReference>
<dbReference type="DNASU" id="10924"/>
<dbReference type="Ensembl" id="ENST00000368440.5">
    <molecule id="Q92484-1"/>
    <property type="protein sequence ID" value="ENSP00000357425.4"/>
    <property type="gene ID" value="ENSG00000172594.13"/>
</dbReference>
<dbReference type="Ensembl" id="ENST00000539041.5">
    <molecule id="Q92484-2"/>
    <property type="protein sequence ID" value="ENSP00000442152.1"/>
    <property type="gene ID" value="ENSG00000172594.13"/>
</dbReference>
<dbReference type="GeneID" id="10924"/>
<dbReference type="KEGG" id="hsa:10924"/>
<dbReference type="MANE-Select" id="ENST00000368440.5">
    <property type="protein sequence ID" value="ENSP00000357425.4"/>
    <property type="RefSeq nucleotide sequence ID" value="NM_006714.5"/>
    <property type="RefSeq protein sequence ID" value="NP_006705.1"/>
</dbReference>
<dbReference type="UCSC" id="uc003pzg.5">
    <molecule id="Q92484-1"/>
    <property type="organism name" value="human"/>
</dbReference>
<dbReference type="AGR" id="HGNC:17389"/>
<dbReference type="CTD" id="10924"/>
<dbReference type="DisGeNET" id="10924"/>
<dbReference type="GeneCards" id="SMPDL3A"/>
<dbReference type="HGNC" id="HGNC:17389">
    <property type="gene designation" value="SMPDL3A"/>
</dbReference>
<dbReference type="HPA" id="ENSG00000172594">
    <property type="expression patterns" value="Low tissue specificity"/>
</dbReference>
<dbReference type="MIM" id="610728">
    <property type="type" value="gene"/>
</dbReference>
<dbReference type="neXtProt" id="NX_Q92484"/>
<dbReference type="OpenTargets" id="ENSG00000172594"/>
<dbReference type="PharmGKB" id="PA134932128"/>
<dbReference type="VEuPathDB" id="HostDB:ENSG00000172594"/>
<dbReference type="eggNOG" id="KOG3770">
    <property type="taxonomic scope" value="Eukaryota"/>
</dbReference>
<dbReference type="GeneTree" id="ENSGT00950000183182"/>
<dbReference type="HOGENOM" id="CLU_014743_0_0_1"/>
<dbReference type="InParanoid" id="Q92484"/>
<dbReference type="OMA" id="TAWHCRS"/>
<dbReference type="OrthoDB" id="348678at2759"/>
<dbReference type="PAN-GO" id="Q92484">
    <property type="GO annotations" value="2 GO annotations based on evolutionary models"/>
</dbReference>
<dbReference type="PhylomeDB" id="Q92484"/>
<dbReference type="TreeFam" id="TF313674"/>
<dbReference type="BRENDA" id="3.1.4.1">
    <property type="organism ID" value="2681"/>
</dbReference>
<dbReference type="BRENDA" id="3.1.4.12">
    <property type="organism ID" value="2681"/>
</dbReference>
<dbReference type="PathwayCommons" id="Q92484"/>
<dbReference type="SABIO-RK" id="Q92484"/>
<dbReference type="SignaLink" id="Q92484"/>
<dbReference type="BioGRID-ORCS" id="10924">
    <property type="hits" value="14 hits in 1149 CRISPR screens"/>
</dbReference>
<dbReference type="ChiTaRS" id="SMPDL3A">
    <property type="organism name" value="human"/>
</dbReference>
<dbReference type="GenomeRNAi" id="10924"/>
<dbReference type="Pharos" id="Q92484">
    <property type="development level" value="Tbio"/>
</dbReference>
<dbReference type="PRO" id="PR:Q92484"/>
<dbReference type="Proteomes" id="UP000005640">
    <property type="component" value="Chromosome 6"/>
</dbReference>
<dbReference type="RNAct" id="Q92484">
    <property type="molecule type" value="protein"/>
</dbReference>
<dbReference type="Bgee" id="ENSG00000172594">
    <property type="expression patterns" value="Expressed in upper leg skin and 200 other cell types or tissues"/>
</dbReference>
<dbReference type="GO" id="GO:0070062">
    <property type="term" value="C:extracellular exosome"/>
    <property type="evidence" value="ECO:0007005"/>
    <property type="project" value="UniProtKB"/>
</dbReference>
<dbReference type="GO" id="GO:0005615">
    <property type="term" value="C:extracellular space"/>
    <property type="evidence" value="ECO:0000314"/>
    <property type="project" value="UniProtKB"/>
</dbReference>
<dbReference type="GO" id="GO:0016887">
    <property type="term" value="F:ATP hydrolysis activity"/>
    <property type="evidence" value="ECO:0007669"/>
    <property type="project" value="RHEA"/>
</dbReference>
<dbReference type="GO" id="GO:0008081">
    <property type="term" value="F:phosphoric diester hydrolase activity"/>
    <property type="evidence" value="ECO:0000314"/>
    <property type="project" value="UniProtKB"/>
</dbReference>
<dbReference type="GO" id="GO:0008270">
    <property type="term" value="F:zinc ion binding"/>
    <property type="evidence" value="ECO:0000314"/>
    <property type="project" value="UniProtKB"/>
</dbReference>
<dbReference type="GO" id="GO:0160049">
    <property type="term" value="P:negative regulation of cGAS/STING signaling pathway"/>
    <property type="evidence" value="ECO:0000315"/>
    <property type="project" value="UniProtKB"/>
</dbReference>
<dbReference type="GO" id="GO:0009143">
    <property type="term" value="P:nucleoside triphosphate catabolic process"/>
    <property type="evidence" value="ECO:0000314"/>
    <property type="project" value="UniProtKB"/>
</dbReference>
<dbReference type="CDD" id="cd00842">
    <property type="entry name" value="MPP_ASMase"/>
    <property type="match status" value="1"/>
</dbReference>
<dbReference type="FunFam" id="3.60.21.10:FF:000044">
    <property type="entry name" value="acid sphingomyelinase-like phosphodiesterase 3a"/>
    <property type="match status" value="1"/>
</dbReference>
<dbReference type="Gene3D" id="3.60.21.10">
    <property type="match status" value="1"/>
</dbReference>
<dbReference type="InterPro" id="IPR017064">
    <property type="entry name" value="ASM-like_Pdiesterase_prd"/>
</dbReference>
<dbReference type="InterPro" id="IPR045473">
    <property type="entry name" value="ASM_C"/>
</dbReference>
<dbReference type="InterPro" id="IPR041805">
    <property type="entry name" value="ASMase/PPN1_MPP"/>
</dbReference>
<dbReference type="InterPro" id="IPR004843">
    <property type="entry name" value="Calcineurin-like_PHP_ApaH"/>
</dbReference>
<dbReference type="InterPro" id="IPR029052">
    <property type="entry name" value="Metallo-depent_PP-like"/>
</dbReference>
<dbReference type="PANTHER" id="PTHR10340:SF24">
    <property type="entry name" value="ACID SPHINGOMYELINASE-LIKE PHOSPHODIESTERASE 3A"/>
    <property type="match status" value="1"/>
</dbReference>
<dbReference type="PANTHER" id="PTHR10340">
    <property type="entry name" value="SPHINGOMYELIN PHOSPHODIESTERASE"/>
    <property type="match status" value="1"/>
</dbReference>
<dbReference type="Pfam" id="PF19272">
    <property type="entry name" value="ASMase_C"/>
    <property type="match status" value="1"/>
</dbReference>
<dbReference type="Pfam" id="PF00149">
    <property type="entry name" value="Metallophos"/>
    <property type="match status" value="1"/>
</dbReference>
<dbReference type="PIRSF" id="PIRSF036767">
    <property type="entry name" value="ASM-like_PDE"/>
    <property type="match status" value="1"/>
</dbReference>
<dbReference type="SUPFAM" id="SSF56300">
    <property type="entry name" value="Metallo-dependent phosphatases"/>
    <property type="match status" value="1"/>
</dbReference>
<evidence type="ECO:0000255" key="1"/>
<evidence type="ECO:0000269" key="2">
    <source>
    </source>
</evidence>
<evidence type="ECO:0000269" key="3">
    <source>
    </source>
</evidence>
<evidence type="ECO:0000269" key="4">
    <source>
    </source>
</evidence>
<evidence type="ECO:0000269" key="5">
    <source>
    </source>
</evidence>
<evidence type="ECO:0000269" key="6">
    <source>
    </source>
</evidence>
<evidence type="ECO:0000303" key="7">
    <source>
    </source>
</evidence>
<evidence type="ECO:0000303" key="8">
    <source>
    </source>
</evidence>
<evidence type="ECO:0000305" key="9"/>
<evidence type="ECO:0000305" key="10">
    <source>
    </source>
</evidence>
<evidence type="ECO:0000312" key="11">
    <source>
        <dbReference type="HGNC" id="HGNC:17389"/>
    </source>
</evidence>
<evidence type="ECO:0007744" key="12">
    <source>
        <dbReference type="PDB" id="5EBB"/>
    </source>
</evidence>
<evidence type="ECO:0007744" key="13">
    <source>
        <dbReference type="PDB" id="5EBE"/>
    </source>
</evidence>
<evidence type="ECO:0007829" key="14">
    <source>
        <dbReference type="PDB" id="5EBB"/>
    </source>
</evidence>
<evidence type="ECO:0007829" key="15">
    <source>
        <dbReference type="PDB" id="5EBE"/>
    </source>
</evidence>
<sequence>MALVRALVCCLLTAWHCRSGLGLPVAPAGGRNPPPAIGQFWHVTDLHLDPTYHITDDHTKVCASSKGANASNPGPFGDVLCDSPYQLILSAFDFIKNSGQEASFMIWTGDSPPHVPVPELSTDTVINVITNMTTTIQSLFPNLQVFPALGNHDYWPQDQLPVVTSKVYNAVANLWKPWLDEEAISTLRKGGFYSQKVTTNPNLRIISLNTNLYYGPNIMTLNKTDPANQFEWLESTLNNSQQNKEKVYIIAHVPVGYLPSSQNITAMREYYNEKLIDIFQKYSDVIAGQFYGHTHRDSIMVLSDKKGSPVNSLFVAPAVTPVKSVLEKQTNNPGIRLFQYDPRDYKLLDMLQYYLNLTEANLKGESIWKLEYILTQTYDIEDLQPESLYGLAKQFTILDSKQFIKYYNYFFVSYDSSVTCDKTCKAFQICAIMNLDNISYADCLKQLYIKHNY</sequence>
<feature type="signal peptide" evidence="1">
    <location>
        <begin position="1"/>
        <end position="22"/>
    </location>
</feature>
<feature type="chain" id="PRO_0000002328" description="Cyclic GMP-AMP phosphodiesterase SMPDL3A">
    <location>
        <begin position="23"/>
        <end position="453"/>
    </location>
</feature>
<feature type="binding site" evidence="4">
    <location>
        <position position="45"/>
    </location>
    <ligand>
        <name>Zn(2+)</name>
        <dbReference type="ChEBI" id="CHEBI:29105"/>
        <label>1</label>
    </ligand>
</feature>
<feature type="binding site" evidence="4">
    <location>
        <position position="47"/>
    </location>
    <ligand>
        <name>Zn(2+)</name>
        <dbReference type="ChEBI" id="CHEBI:29105"/>
        <label>1</label>
    </ligand>
</feature>
<feature type="binding site" evidence="4">
    <location>
        <position position="110"/>
    </location>
    <ligand>
        <name>Zn(2+)</name>
        <dbReference type="ChEBI" id="CHEBI:29105"/>
        <label>1</label>
    </ligand>
</feature>
<feature type="binding site" evidence="4">
    <location>
        <position position="110"/>
    </location>
    <ligand>
        <name>Zn(2+)</name>
        <dbReference type="ChEBI" id="CHEBI:29105"/>
        <label>2</label>
    </ligand>
</feature>
<feature type="binding site" evidence="10">
    <location>
        <position position="114"/>
    </location>
    <ligand>
        <name>ATP</name>
        <dbReference type="ChEBI" id="CHEBI:30616"/>
    </ligand>
</feature>
<feature type="binding site" evidence="10">
    <location>
        <position position="151"/>
    </location>
    <ligand>
        <name>ATP</name>
        <dbReference type="ChEBI" id="CHEBI:30616"/>
    </ligand>
</feature>
<feature type="binding site" evidence="4">
    <location>
        <position position="151"/>
    </location>
    <ligand>
        <name>Zn(2+)</name>
        <dbReference type="ChEBI" id="CHEBI:29105"/>
        <label>2</label>
    </ligand>
</feature>
<feature type="binding site" evidence="10">
    <location>
        <position position="152"/>
    </location>
    <ligand>
        <name>ATP</name>
        <dbReference type="ChEBI" id="CHEBI:30616"/>
    </ligand>
</feature>
<feature type="binding site" evidence="4">
    <location>
        <position position="252"/>
    </location>
    <ligand>
        <name>Zn(2+)</name>
        <dbReference type="ChEBI" id="CHEBI:29105"/>
        <label>2</label>
    </ligand>
</feature>
<feature type="binding site" evidence="4">
    <location>
        <position position="293"/>
    </location>
    <ligand>
        <name>Zn(2+)</name>
        <dbReference type="ChEBI" id="CHEBI:29105"/>
        <label>2</label>
    </ligand>
</feature>
<feature type="binding site" evidence="4">
    <location>
        <position position="295"/>
    </location>
    <ligand>
        <name>Zn(2+)</name>
        <dbReference type="ChEBI" id="CHEBI:29105"/>
        <label>1</label>
    </ligand>
</feature>
<feature type="glycosylation site" description="N-linked (GlcNAc...) asparagine" evidence="1 4 5">
    <location>
        <position position="69"/>
    </location>
</feature>
<feature type="glycosylation site" description="N-linked (GlcNAc...) asparagine" evidence="1 4">
    <location>
        <position position="131"/>
    </location>
</feature>
<feature type="glycosylation site" description="N-linked (GlcNAc...) asparagine" evidence="2 5">
    <location>
        <position position="222"/>
    </location>
</feature>
<feature type="glycosylation site" description="N-linked (GlcNAc...) asparagine" evidence="1">
    <location>
        <position position="238"/>
    </location>
</feature>
<feature type="glycosylation site" description="N-linked (GlcNAc...) asparagine" evidence="2">
    <location>
        <position position="263"/>
    </location>
</feature>
<feature type="glycosylation site" description="N-linked (GlcNAc...) asparagine" evidence="2 4 5">
    <location>
        <position position="356"/>
    </location>
</feature>
<feature type="glycosylation site" description="N-linked (GlcNAc...) asparagine" evidence="1">
    <location>
        <position position="437"/>
    </location>
</feature>
<feature type="disulfide bond" evidence="4 12 13">
    <location>
        <begin position="62"/>
        <end position="81"/>
    </location>
</feature>
<feature type="disulfide bond" evidence="1">
    <location>
        <begin position="420"/>
        <end position="424"/>
    </location>
</feature>
<feature type="disulfide bond" evidence="4 12 13">
    <location>
        <begin position="430"/>
        <end position="443"/>
    </location>
</feature>
<feature type="splice variant" id="VSP_054640" description="In isoform 2." evidence="7">
    <location>
        <begin position="1"/>
        <end position="131"/>
    </location>
</feature>
<feature type="sequence variant" id="VAR_048338" description="In dbSNP:rs12523814.">
    <original>H</original>
    <variation>Y</variation>
    <location>
        <position position="16"/>
    </location>
</feature>
<feature type="sequence variant" id="VAR_048339" description="In dbSNP:rs28385609.">
    <original>P</original>
    <variation>S</variation>
    <location>
        <position position="161"/>
    </location>
</feature>
<feature type="mutagenesis site" description="Impaired protein maturation and secretion." evidence="5">
    <original>N</original>
    <variation>Q</variation>
    <location>
        <position position="69"/>
    </location>
</feature>
<feature type="mutagenesis site" description="Abolished ability to hydrolyze 2',3'-cGAMP." evidence="6">
    <original>PP</original>
    <variation>LL</variation>
    <location>
        <begin position="112"/>
        <end position="113"/>
    </location>
</feature>
<feature type="mutagenesis site" description="Decreased but not abolished ability to hydrolyze 2',3'-cGAMP." evidence="6">
    <original>H</original>
    <variation>Q</variation>
    <location>
        <position position="114"/>
    </location>
</feature>
<feature type="mutagenesis site" description="Impaired protein maturation and secretion." evidence="5">
    <original>N</original>
    <variation>Q</variation>
    <location>
        <position position="222"/>
    </location>
</feature>
<feature type="mutagenesis site" description="Increased degradation by the proteasome and decreased phosphodiesterase activity." evidence="5">
    <original>N</original>
    <variation>Q</variation>
    <location>
        <position position="356"/>
    </location>
</feature>
<feature type="mutagenesis site" description="Abolished ability to dimerize and hydrolyze 2',3'-cGAMP." evidence="6">
    <original>EANL</original>
    <variation>DANA</variation>
    <location>
        <begin position="359"/>
        <end position="362"/>
    </location>
</feature>
<feature type="sequence conflict" description="In Ref. 5; CAA69330." evidence="9" ref="5">
    <original>N</original>
    <variation>K</variation>
    <location>
        <position position="452"/>
    </location>
</feature>
<feature type="strand" evidence="14">
    <location>
        <begin position="38"/>
        <end position="43"/>
    </location>
</feature>
<feature type="helix" evidence="14">
    <location>
        <begin position="58"/>
        <end position="60"/>
    </location>
</feature>
<feature type="helix" evidence="14">
    <location>
        <begin position="63"/>
        <end position="65"/>
    </location>
</feature>
<feature type="helix" evidence="14">
    <location>
        <begin position="85"/>
        <end position="97"/>
    </location>
</feature>
<feature type="strand" evidence="14">
    <location>
        <begin position="103"/>
        <end position="107"/>
    </location>
</feature>
<feature type="helix" evidence="14">
    <location>
        <begin position="117"/>
        <end position="119"/>
    </location>
</feature>
<feature type="helix" evidence="14">
    <location>
        <begin position="122"/>
        <end position="139"/>
    </location>
</feature>
<feature type="strand" evidence="15">
    <location>
        <begin position="140"/>
        <end position="142"/>
    </location>
</feature>
<feature type="strand" evidence="14">
    <location>
        <begin position="145"/>
        <end position="147"/>
    </location>
</feature>
<feature type="strand" evidence="14">
    <location>
        <begin position="153"/>
        <end position="156"/>
    </location>
</feature>
<feature type="helix" evidence="14">
    <location>
        <begin position="166"/>
        <end position="175"/>
    </location>
</feature>
<feature type="turn" evidence="14">
    <location>
        <begin position="176"/>
        <end position="178"/>
    </location>
</feature>
<feature type="helix" evidence="14">
    <location>
        <begin position="181"/>
        <end position="190"/>
    </location>
</feature>
<feature type="strand" evidence="14">
    <location>
        <begin position="193"/>
        <end position="197"/>
    </location>
</feature>
<feature type="strand" evidence="14">
    <location>
        <begin position="200"/>
        <end position="207"/>
    </location>
</feature>
<feature type="helix" evidence="14">
    <location>
        <begin position="210"/>
        <end position="213"/>
    </location>
</feature>
<feature type="helix" evidence="14">
    <location>
        <begin position="218"/>
        <end position="220"/>
    </location>
</feature>
<feature type="helix" evidence="14">
    <location>
        <begin position="226"/>
        <end position="228"/>
    </location>
</feature>
<feature type="helix" evidence="14">
    <location>
        <begin position="229"/>
        <end position="242"/>
    </location>
</feature>
<feature type="strand" evidence="14">
    <location>
        <begin position="246"/>
        <end position="250"/>
    </location>
</feature>
<feature type="strand" evidence="14">
    <location>
        <begin position="255"/>
        <end position="257"/>
    </location>
</feature>
<feature type="strand" evidence="14">
    <location>
        <begin position="261"/>
        <end position="263"/>
    </location>
</feature>
<feature type="strand" evidence="14">
    <location>
        <begin position="265"/>
        <end position="267"/>
    </location>
</feature>
<feature type="helix" evidence="14">
    <location>
        <begin position="269"/>
        <end position="281"/>
    </location>
</feature>
<feature type="turn" evidence="14">
    <location>
        <begin position="282"/>
        <end position="285"/>
    </location>
</feature>
<feature type="strand" evidence="14">
    <location>
        <begin position="286"/>
        <end position="291"/>
    </location>
</feature>
<feature type="strand" evidence="14">
    <location>
        <begin position="298"/>
        <end position="303"/>
    </location>
</feature>
<feature type="strand" evidence="15">
    <location>
        <begin position="305"/>
        <end position="307"/>
    </location>
</feature>
<feature type="strand" evidence="14">
    <location>
        <begin position="309"/>
        <end position="315"/>
    </location>
</feature>
<feature type="strand" evidence="14">
    <location>
        <begin position="334"/>
        <end position="340"/>
    </location>
</feature>
<feature type="turn" evidence="14">
    <location>
        <begin position="342"/>
        <end position="344"/>
    </location>
</feature>
<feature type="strand" evidence="14">
    <location>
        <begin position="347"/>
        <end position="355"/>
    </location>
</feature>
<feature type="helix" evidence="14">
    <location>
        <begin position="357"/>
        <end position="363"/>
    </location>
</feature>
<feature type="strand" evidence="14">
    <location>
        <begin position="368"/>
        <end position="373"/>
    </location>
</feature>
<feature type="helix" evidence="14">
    <location>
        <begin position="374"/>
        <end position="378"/>
    </location>
</feature>
<feature type="strand" evidence="15">
    <location>
        <begin position="381"/>
        <end position="383"/>
    </location>
</feature>
<feature type="helix" evidence="14">
    <location>
        <begin position="385"/>
        <end position="395"/>
    </location>
</feature>
<feature type="helix" evidence="14">
    <location>
        <begin position="401"/>
        <end position="410"/>
    </location>
</feature>
<feature type="turn" evidence="14">
    <location>
        <begin position="411"/>
        <end position="413"/>
    </location>
</feature>
<feature type="helix" evidence="14">
    <location>
        <begin position="422"/>
        <end position="433"/>
    </location>
</feature>
<feature type="helix" evidence="14">
    <location>
        <begin position="437"/>
        <end position="442"/>
    </location>
</feature>
<keyword id="KW-0002">3D-structure</keyword>
<keyword id="KW-0025">Alternative splicing</keyword>
<keyword id="KW-1015">Disulfide bond</keyword>
<keyword id="KW-0325">Glycoprotein</keyword>
<keyword id="KW-0378">Hydrolase</keyword>
<keyword id="KW-0479">Metal-binding</keyword>
<keyword id="KW-1267">Proteomics identification</keyword>
<keyword id="KW-1185">Reference proteome</keyword>
<keyword id="KW-0964">Secreted</keyword>
<keyword id="KW-0732">Signal</keyword>
<keyword id="KW-0862">Zinc</keyword>
<reference key="1">
    <citation type="journal article" date="2004" name="Nat. Genet.">
        <title>Complete sequencing and characterization of 21,243 full-length human cDNAs.</title>
        <authorList>
            <person name="Ota T."/>
            <person name="Suzuki Y."/>
            <person name="Nishikawa T."/>
            <person name="Otsuki T."/>
            <person name="Sugiyama T."/>
            <person name="Irie R."/>
            <person name="Wakamatsu A."/>
            <person name="Hayashi K."/>
            <person name="Sato H."/>
            <person name="Nagai K."/>
            <person name="Kimura K."/>
            <person name="Makita H."/>
            <person name="Sekine M."/>
            <person name="Obayashi M."/>
            <person name="Nishi T."/>
            <person name="Shibahara T."/>
            <person name="Tanaka T."/>
            <person name="Ishii S."/>
            <person name="Yamamoto J."/>
            <person name="Saito K."/>
            <person name="Kawai Y."/>
            <person name="Isono Y."/>
            <person name="Nakamura Y."/>
            <person name="Nagahari K."/>
            <person name="Murakami K."/>
            <person name="Yasuda T."/>
            <person name="Iwayanagi T."/>
            <person name="Wagatsuma M."/>
            <person name="Shiratori A."/>
            <person name="Sudo H."/>
            <person name="Hosoiri T."/>
            <person name="Kaku Y."/>
            <person name="Kodaira H."/>
            <person name="Kondo H."/>
            <person name="Sugawara M."/>
            <person name="Takahashi M."/>
            <person name="Kanda K."/>
            <person name="Yokoi T."/>
            <person name="Furuya T."/>
            <person name="Kikkawa E."/>
            <person name="Omura Y."/>
            <person name="Abe K."/>
            <person name="Kamihara K."/>
            <person name="Katsuta N."/>
            <person name="Sato K."/>
            <person name="Tanikawa M."/>
            <person name="Yamazaki M."/>
            <person name="Ninomiya K."/>
            <person name="Ishibashi T."/>
            <person name="Yamashita H."/>
            <person name="Murakawa K."/>
            <person name="Fujimori K."/>
            <person name="Tanai H."/>
            <person name="Kimata M."/>
            <person name="Watanabe M."/>
            <person name="Hiraoka S."/>
            <person name="Chiba Y."/>
            <person name="Ishida S."/>
            <person name="Ono Y."/>
            <person name="Takiguchi S."/>
            <person name="Watanabe S."/>
            <person name="Yosida M."/>
            <person name="Hotuta T."/>
            <person name="Kusano J."/>
            <person name="Kanehori K."/>
            <person name="Takahashi-Fujii A."/>
            <person name="Hara H."/>
            <person name="Tanase T.-O."/>
            <person name="Nomura Y."/>
            <person name="Togiya S."/>
            <person name="Komai F."/>
            <person name="Hara R."/>
            <person name="Takeuchi K."/>
            <person name="Arita M."/>
            <person name="Imose N."/>
            <person name="Musashino K."/>
            <person name="Yuuki H."/>
            <person name="Oshima A."/>
            <person name="Sasaki N."/>
            <person name="Aotsuka S."/>
            <person name="Yoshikawa Y."/>
            <person name="Matsunawa H."/>
            <person name="Ichihara T."/>
            <person name="Shiohata N."/>
            <person name="Sano S."/>
            <person name="Moriya S."/>
            <person name="Momiyama H."/>
            <person name="Satoh N."/>
            <person name="Takami S."/>
            <person name="Terashima Y."/>
            <person name="Suzuki O."/>
            <person name="Nakagawa S."/>
            <person name="Senoh A."/>
            <person name="Mizoguchi H."/>
            <person name="Goto Y."/>
            <person name="Shimizu F."/>
            <person name="Wakebe H."/>
            <person name="Hishigaki H."/>
            <person name="Watanabe T."/>
            <person name="Sugiyama A."/>
            <person name="Takemoto M."/>
            <person name="Kawakami B."/>
            <person name="Yamazaki M."/>
            <person name="Watanabe K."/>
            <person name="Kumagai A."/>
            <person name="Itakura S."/>
            <person name="Fukuzumi Y."/>
            <person name="Fujimori Y."/>
            <person name="Komiyama M."/>
            <person name="Tashiro H."/>
            <person name="Tanigami A."/>
            <person name="Fujiwara T."/>
            <person name="Ono T."/>
            <person name="Yamada K."/>
            <person name="Fujii Y."/>
            <person name="Ozaki K."/>
            <person name="Hirao M."/>
            <person name="Ohmori Y."/>
            <person name="Kawabata A."/>
            <person name="Hikiji T."/>
            <person name="Kobatake N."/>
            <person name="Inagaki H."/>
            <person name="Ikema Y."/>
            <person name="Okamoto S."/>
            <person name="Okitani R."/>
            <person name="Kawakami T."/>
            <person name="Noguchi S."/>
            <person name="Itoh T."/>
            <person name="Shigeta K."/>
            <person name="Senba T."/>
            <person name="Matsumura K."/>
            <person name="Nakajima Y."/>
            <person name="Mizuno T."/>
            <person name="Morinaga M."/>
            <person name="Sasaki M."/>
            <person name="Togashi T."/>
            <person name="Oyama M."/>
            <person name="Hata H."/>
            <person name="Watanabe M."/>
            <person name="Komatsu T."/>
            <person name="Mizushima-Sugano J."/>
            <person name="Satoh T."/>
            <person name="Shirai Y."/>
            <person name="Takahashi Y."/>
            <person name="Nakagawa K."/>
            <person name="Okumura K."/>
            <person name="Nagase T."/>
            <person name="Nomura N."/>
            <person name="Kikuchi H."/>
            <person name="Masuho Y."/>
            <person name="Yamashita R."/>
            <person name="Nakai K."/>
            <person name="Yada T."/>
            <person name="Nakamura Y."/>
            <person name="Ohara O."/>
            <person name="Isogai T."/>
            <person name="Sugano S."/>
        </authorList>
    </citation>
    <scope>NUCLEOTIDE SEQUENCE [LARGE SCALE MRNA] (ISOFORM 2)</scope>
    <source>
        <tissue>Synovium</tissue>
    </source>
</reference>
<reference key="2">
    <citation type="journal article" date="2003" name="Nature">
        <title>The DNA sequence and analysis of human chromosome 6.</title>
        <authorList>
            <person name="Mungall A.J."/>
            <person name="Palmer S.A."/>
            <person name="Sims S.K."/>
            <person name="Edwards C.A."/>
            <person name="Ashurst J.L."/>
            <person name="Wilming L."/>
            <person name="Jones M.C."/>
            <person name="Horton R."/>
            <person name="Hunt S.E."/>
            <person name="Scott C.E."/>
            <person name="Gilbert J.G.R."/>
            <person name="Clamp M.E."/>
            <person name="Bethel G."/>
            <person name="Milne S."/>
            <person name="Ainscough R."/>
            <person name="Almeida J.P."/>
            <person name="Ambrose K.D."/>
            <person name="Andrews T.D."/>
            <person name="Ashwell R.I.S."/>
            <person name="Babbage A.K."/>
            <person name="Bagguley C.L."/>
            <person name="Bailey J."/>
            <person name="Banerjee R."/>
            <person name="Barker D.J."/>
            <person name="Barlow K.F."/>
            <person name="Bates K."/>
            <person name="Beare D.M."/>
            <person name="Beasley H."/>
            <person name="Beasley O."/>
            <person name="Bird C.P."/>
            <person name="Blakey S.E."/>
            <person name="Bray-Allen S."/>
            <person name="Brook J."/>
            <person name="Brown A.J."/>
            <person name="Brown J.Y."/>
            <person name="Burford D.C."/>
            <person name="Burrill W."/>
            <person name="Burton J."/>
            <person name="Carder C."/>
            <person name="Carter N.P."/>
            <person name="Chapman J.C."/>
            <person name="Clark S.Y."/>
            <person name="Clark G."/>
            <person name="Clee C.M."/>
            <person name="Clegg S."/>
            <person name="Cobley V."/>
            <person name="Collier R.E."/>
            <person name="Collins J.E."/>
            <person name="Colman L.K."/>
            <person name="Corby N.R."/>
            <person name="Coville G.J."/>
            <person name="Culley K.M."/>
            <person name="Dhami P."/>
            <person name="Davies J."/>
            <person name="Dunn M."/>
            <person name="Earthrowl M.E."/>
            <person name="Ellington A.E."/>
            <person name="Evans K.A."/>
            <person name="Faulkner L."/>
            <person name="Francis M.D."/>
            <person name="Frankish A."/>
            <person name="Frankland J."/>
            <person name="French L."/>
            <person name="Garner P."/>
            <person name="Garnett J."/>
            <person name="Ghori M.J."/>
            <person name="Gilby L.M."/>
            <person name="Gillson C.J."/>
            <person name="Glithero R.J."/>
            <person name="Grafham D.V."/>
            <person name="Grant M."/>
            <person name="Gribble S."/>
            <person name="Griffiths C."/>
            <person name="Griffiths M.N.D."/>
            <person name="Hall R."/>
            <person name="Halls K.S."/>
            <person name="Hammond S."/>
            <person name="Harley J.L."/>
            <person name="Hart E.A."/>
            <person name="Heath P.D."/>
            <person name="Heathcott R."/>
            <person name="Holmes S.J."/>
            <person name="Howden P.J."/>
            <person name="Howe K.L."/>
            <person name="Howell G.R."/>
            <person name="Huckle E."/>
            <person name="Humphray S.J."/>
            <person name="Humphries M.D."/>
            <person name="Hunt A.R."/>
            <person name="Johnson C.M."/>
            <person name="Joy A.A."/>
            <person name="Kay M."/>
            <person name="Keenan S.J."/>
            <person name="Kimberley A.M."/>
            <person name="King A."/>
            <person name="Laird G.K."/>
            <person name="Langford C."/>
            <person name="Lawlor S."/>
            <person name="Leongamornlert D.A."/>
            <person name="Leversha M."/>
            <person name="Lloyd C.R."/>
            <person name="Lloyd D.M."/>
            <person name="Loveland J.E."/>
            <person name="Lovell J."/>
            <person name="Martin S."/>
            <person name="Mashreghi-Mohammadi M."/>
            <person name="Maslen G.L."/>
            <person name="Matthews L."/>
            <person name="McCann O.T."/>
            <person name="McLaren S.J."/>
            <person name="McLay K."/>
            <person name="McMurray A."/>
            <person name="Moore M.J.F."/>
            <person name="Mullikin J.C."/>
            <person name="Niblett D."/>
            <person name="Nickerson T."/>
            <person name="Novik K.L."/>
            <person name="Oliver K."/>
            <person name="Overton-Larty E.K."/>
            <person name="Parker A."/>
            <person name="Patel R."/>
            <person name="Pearce A.V."/>
            <person name="Peck A.I."/>
            <person name="Phillimore B.J.C.T."/>
            <person name="Phillips S."/>
            <person name="Plumb R.W."/>
            <person name="Porter K.M."/>
            <person name="Ramsey Y."/>
            <person name="Ranby S.A."/>
            <person name="Rice C.M."/>
            <person name="Ross M.T."/>
            <person name="Searle S.M."/>
            <person name="Sehra H.K."/>
            <person name="Sheridan E."/>
            <person name="Skuce C.D."/>
            <person name="Smith S."/>
            <person name="Smith M."/>
            <person name="Spraggon L."/>
            <person name="Squares S.L."/>
            <person name="Steward C.A."/>
            <person name="Sycamore N."/>
            <person name="Tamlyn-Hall G."/>
            <person name="Tester J."/>
            <person name="Theaker A.J."/>
            <person name="Thomas D.W."/>
            <person name="Thorpe A."/>
            <person name="Tracey A."/>
            <person name="Tromans A."/>
            <person name="Tubby B."/>
            <person name="Wall M."/>
            <person name="Wallis J.M."/>
            <person name="West A.P."/>
            <person name="White S.S."/>
            <person name="Whitehead S.L."/>
            <person name="Whittaker H."/>
            <person name="Wild A."/>
            <person name="Willey D.J."/>
            <person name="Wilmer T.E."/>
            <person name="Wood J.M."/>
            <person name="Wray P.W."/>
            <person name="Wyatt J.C."/>
            <person name="Young L."/>
            <person name="Younger R.M."/>
            <person name="Bentley D.R."/>
            <person name="Coulson A."/>
            <person name="Durbin R.M."/>
            <person name="Hubbard T."/>
            <person name="Sulston J.E."/>
            <person name="Dunham I."/>
            <person name="Rogers J."/>
            <person name="Beck S."/>
        </authorList>
    </citation>
    <scope>NUCLEOTIDE SEQUENCE [LARGE SCALE GENOMIC DNA]</scope>
</reference>
<reference key="3">
    <citation type="submission" date="2005-09" db="EMBL/GenBank/DDBJ databases">
        <authorList>
            <person name="Mural R.J."/>
            <person name="Istrail S."/>
            <person name="Sutton G."/>
            <person name="Florea L."/>
            <person name="Halpern A.L."/>
            <person name="Mobarry C.M."/>
            <person name="Lippert R."/>
            <person name="Walenz B."/>
            <person name="Shatkay H."/>
            <person name="Dew I."/>
            <person name="Miller J.R."/>
            <person name="Flanigan M.J."/>
            <person name="Edwards N.J."/>
            <person name="Bolanos R."/>
            <person name="Fasulo D."/>
            <person name="Halldorsson B.V."/>
            <person name="Hannenhalli S."/>
            <person name="Turner R."/>
            <person name="Yooseph S."/>
            <person name="Lu F."/>
            <person name="Nusskern D.R."/>
            <person name="Shue B.C."/>
            <person name="Zheng X.H."/>
            <person name="Zhong F."/>
            <person name="Delcher A.L."/>
            <person name="Huson D.H."/>
            <person name="Kravitz S.A."/>
            <person name="Mouchard L."/>
            <person name="Reinert K."/>
            <person name="Remington K.A."/>
            <person name="Clark A.G."/>
            <person name="Waterman M.S."/>
            <person name="Eichler E.E."/>
            <person name="Adams M.D."/>
            <person name="Hunkapiller M.W."/>
            <person name="Myers E.W."/>
            <person name="Venter J.C."/>
        </authorList>
    </citation>
    <scope>NUCLEOTIDE SEQUENCE [LARGE SCALE GENOMIC DNA]</scope>
</reference>
<reference key="4">
    <citation type="journal article" date="2004" name="Genome Res.">
        <title>The status, quality, and expansion of the NIH full-length cDNA project: the Mammalian Gene Collection (MGC).</title>
        <authorList>
            <consortium name="The MGC Project Team"/>
        </authorList>
    </citation>
    <scope>NUCLEOTIDE SEQUENCE [LARGE SCALE MRNA] (ISOFORM 1)</scope>
    <source>
        <tissue>Placenta</tissue>
    </source>
</reference>
<reference key="5">
    <citation type="submission" date="1996-09" db="EMBL/GenBank/DDBJ databases">
        <title>Acid sphingomyelinase is a member of a multi-gene family and shares motifs with a large family of metallo-phosphoesterases.</title>
        <authorList>
            <person name="Hofmann K."/>
        </authorList>
    </citation>
    <scope>NUCLEOTIDE SEQUENCE [MRNA] OF 277-453 (ISOFORM 1/2)</scope>
</reference>
<reference key="6">
    <citation type="journal article" date="2009" name="J. Proteome Res.">
        <title>Glycoproteomics analysis of human liver tissue by combination of multiple enzyme digestion and hydrazide chemistry.</title>
        <authorList>
            <person name="Chen R."/>
            <person name="Jiang X."/>
            <person name="Sun D."/>
            <person name="Han G."/>
            <person name="Wang F."/>
            <person name="Ye M."/>
            <person name="Wang L."/>
            <person name="Zou H."/>
        </authorList>
    </citation>
    <scope>GLYCOSYLATION [LARGE SCALE ANALYSIS] AT ASN-222; ASN-263 AND ASN-356</scope>
    <source>
        <tissue>Liver</tissue>
    </source>
</reference>
<reference key="7">
    <citation type="journal article" date="2014" name="J. Biol. Chem.">
        <title>Sphingomyelin phosphodiesterase acid-like 3A (SMPDL3A) is a novel nucleotide phosphodiesterase regulated by cholesterol in human macrophages.</title>
        <authorList>
            <person name="Traini M."/>
            <person name="Quinn C.M."/>
            <person name="Sandoval C."/>
            <person name="Johansson E."/>
            <person name="Schroder K."/>
            <person name="Kockx M."/>
            <person name="Meikle P.J."/>
            <person name="Jessup W."/>
            <person name="Kritharides L."/>
        </authorList>
    </citation>
    <scope>CATALYTIC ACTIVITY</scope>
    <scope>FUNCTION</scope>
    <scope>LACK OF SPHINGOMYELIN PHOSPHODIESTERASE ACTIVITY</scope>
    <scope>BIOPHYSICOCHEMICAL PROPERTIES</scope>
    <scope>ACTIVITY REGULATION</scope>
    <scope>SUBCELLULAR LOCATION</scope>
    <scope>GLYCOSYLATION</scope>
    <scope>INDUCTION BY CHOLESTEROL</scope>
    <scope>TISSUE SPECIFICITY</scope>
</reference>
<reference key="8">
    <citation type="journal article" date="2017" name="Biochem. J.">
        <title>N-glycosylation of human sphingomyelin phosphodiesterase acid-like 3A (SMPDL3A) is essential for stability, secretion and activity.</title>
        <authorList>
            <person name="Traini M."/>
            <person name="Kumaran R."/>
            <person name="Thaysen-Andersen M."/>
            <person name="Kockx M."/>
            <person name="Jessup W."/>
            <person name="Kritharides L."/>
        </authorList>
    </citation>
    <scope>FUNCTION</scope>
    <scope>CATALYTIC ACTIVITY</scope>
    <scope>SUBCELLULAR LOCATION</scope>
    <scope>GLYCOSYLATION AT ASN-69; ASN-222 AND ASN-356</scope>
    <scope>MUTAGENESIS OF ASN-69; ASN-222 AND ASN-356</scope>
</reference>
<reference key="9">
    <citation type="journal article" date="2023" name="Immunity">
        <title>SMPDL3A is a cGAMP-degrading enzyme induced by LXR-mediated lipid metabolism to restrict cGAS-STING DNA sensing.</title>
        <authorList>
            <person name="Hou Y."/>
            <person name="Wang Z."/>
            <person name="Liu P."/>
            <person name="Wei X."/>
            <person name="Zhang Z."/>
            <person name="Fan S."/>
            <person name="Zhang L."/>
            <person name="Han F."/>
            <person name="Song Y."/>
            <person name="Chu L."/>
            <person name="Zhang C."/>
        </authorList>
    </citation>
    <scope>FUNCTION</scope>
    <scope>CATALYTIC ACTIVITY</scope>
    <scope>BIOPHYSICOCHEMICAL PROPERTIES</scope>
    <scope>SUBUNIT</scope>
    <scope>SUBCELLULAR LOCATION</scope>
    <scope>INDUCTION</scope>
    <scope>MUTAGENESIS OF 112-PRO-PRO-113; HIS-114 AND 359-GLU--LEU-362</scope>
</reference>
<reference key="10">
    <citation type="journal article" date="2016" name="FEBS J.">
        <title>The structure and catalytic mechanism of human sphingomyelin phosphodiesterase like 3a - an acid sphingomyelinase homolog with a novel nucleotide hydrolase activity.</title>
        <authorList>
            <person name="Lim S.M."/>
            <person name="Yeung K."/>
            <person name="Tresaugues L."/>
            <person name="Ling T.H."/>
            <person name="Nordlund P."/>
        </authorList>
    </citation>
    <scope>X-RAY CRYSTALLOGRAPHY (2.60 ANGSTROMS) OF 34-443 IN COMPLEX WITH CMP; PHOSPHORIBOSE AND ZINC IONS</scope>
    <scope>FUNCTION</scope>
    <scope>CATALYTIC ACTIVITY</scope>
    <scope>BIOPHYSICOCHEMICAL PROPERTIES</scope>
    <scope>COFACTOR</scope>
    <scope>SUBUNIT</scope>
    <scope>DISULFIDE BONDS</scope>
    <scope>GLYCOSYLATION AT ASN-69; ASN-131 AND ASN-356</scope>
    <scope>ACTIVITY REGULATION</scope>
</reference>
<organism>
    <name type="scientific">Homo sapiens</name>
    <name type="common">Human</name>
    <dbReference type="NCBI Taxonomy" id="9606"/>
    <lineage>
        <taxon>Eukaryota</taxon>
        <taxon>Metazoa</taxon>
        <taxon>Chordata</taxon>
        <taxon>Craniata</taxon>
        <taxon>Vertebrata</taxon>
        <taxon>Euteleostomi</taxon>
        <taxon>Mammalia</taxon>
        <taxon>Eutheria</taxon>
        <taxon>Euarchontoglires</taxon>
        <taxon>Primates</taxon>
        <taxon>Haplorrhini</taxon>
        <taxon>Catarrhini</taxon>
        <taxon>Hominidae</taxon>
        <taxon>Homo</taxon>
    </lineage>
</organism>
<proteinExistence type="evidence at protein level"/>
<comment type="function">
    <text evidence="3 4 5 6">Cyclic-nucleotide phosphodiesterase that acts as a negative regulator of innate immunity by mediating degradation of 2',3'-cGAMP, thereby inhibiting the cGAS-STING signaling (PubMed:37890481). Specifically linearizes 2',3'-cGAMP into 2'5'-bond pGpA and further hydrolyzes pGpA to produce GpA (PubMed:37890481). Also has in vitro nucleotide phosphodiesterase activity with nucleoside triphosphates, such as ATP (PubMed:25288789, PubMed:26783088). Has in vitro activity with p-nitrophenyl-TMP (PubMed:25288789). Has lower activity with nucleoside diphosphates, and no activity with nucleoside monophosphates (PubMed:25288789, PubMed:26783088, PubMed:28104755). Has in vitro activity with CDP-choline, giving rise to CMP and phosphocholine. Has in vitro activity with CDP-ethanolamine (PubMed:26783088). Does not have sphingomyelin phosphodiesterase activity (PubMed:25288789, PubMed:26783088).</text>
</comment>
<comment type="catalytic activity">
    <reaction evidence="6">
        <text>2',3'-cGAMP + H2O = 5'-pGpA(2'-5') + H(+)</text>
        <dbReference type="Rhea" id="RHEA:78339"/>
        <dbReference type="ChEBI" id="CHEBI:15377"/>
        <dbReference type="ChEBI" id="CHEBI:15378"/>
        <dbReference type="ChEBI" id="CHEBI:143093"/>
        <dbReference type="ChEBI" id="CHEBI:228270"/>
    </reaction>
    <physiologicalReaction direction="left-to-right" evidence="6">
        <dbReference type="Rhea" id="RHEA:78340"/>
    </physiologicalReaction>
</comment>
<comment type="catalytic activity">
    <reaction evidence="6">
        <text>5'-pGpA(2'-5') + H2O = 5'-GpA(2'-5') + phosphate</text>
        <dbReference type="Rhea" id="RHEA:78343"/>
        <dbReference type="ChEBI" id="CHEBI:15377"/>
        <dbReference type="ChEBI" id="CHEBI:43474"/>
        <dbReference type="ChEBI" id="CHEBI:228270"/>
        <dbReference type="ChEBI" id="CHEBI:228271"/>
    </reaction>
    <physiologicalReaction direction="left-to-right" evidence="6">
        <dbReference type="Rhea" id="RHEA:78344"/>
    </physiologicalReaction>
</comment>
<comment type="catalytic activity">
    <reaction evidence="3 4 5">
        <text>a ribonucleoside 5'-triphosphate + H2O = a ribonucleoside 5'-diphosphate + phosphate + H(+)</text>
        <dbReference type="Rhea" id="RHEA:23680"/>
        <dbReference type="ChEBI" id="CHEBI:15377"/>
        <dbReference type="ChEBI" id="CHEBI:15378"/>
        <dbReference type="ChEBI" id="CHEBI:43474"/>
        <dbReference type="ChEBI" id="CHEBI:57930"/>
        <dbReference type="ChEBI" id="CHEBI:61557"/>
        <dbReference type="EC" id="3.6.1.15"/>
    </reaction>
    <physiologicalReaction direction="left-to-right" evidence="3 4 5">
        <dbReference type="Rhea" id="RHEA:23681"/>
    </physiologicalReaction>
</comment>
<comment type="catalytic activity">
    <reaction evidence="3 4 5 6">
        <text>ATP + H2O = ADP + phosphate + H(+)</text>
        <dbReference type="Rhea" id="RHEA:13065"/>
        <dbReference type="ChEBI" id="CHEBI:15377"/>
        <dbReference type="ChEBI" id="CHEBI:15378"/>
        <dbReference type="ChEBI" id="CHEBI:30616"/>
        <dbReference type="ChEBI" id="CHEBI:43474"/>
        <dbReference type="ChEBI" id="CHEBI:456216"/>
    </reaction>
    <physiologicalReaction direction="left-to-right" evidence="3 4 5 6">
        <dbReference type="Rhea" id="RHEA:13066"/>
    </physiologicalReaction>
</comment>
<comment type="cofactor">
    <cofactor evidence="4 6">
        <name>Zn(2+)</name>
        <dbReference type="ChEBI" id="CHEBI:29105"/>
    </cofactor>
    <text evidence="4 6">Binds 2 Zn(2+) per subunit.</text>
</comment>
<comment type="activity regulation">
    <text evidence="3 4">Requires micromolar levels of Zn(2+) for activity (PubMed:26783088). Inhibited by millimolar levels of Zn(2+) (PubMed:25288789, PubMed:26783088).</text>
</comment>
<comment type="biophysicochemical properties">
    <kinetics>
        <KM evidence="4">326 uM for ATP</KM>
        <KM evidence="4">306 uM for ADP</KM>
        <KM evidence="4">348 uM for ADP-ribose</KM>
        <KM evidence="4">390 uM for CDP-ethanolamine</KM>
        <KM evidence="4">262 uM for CDP-choline</KM>
        <KM evidence="6">42 uM for ATP</KM>
        <KM evidence="6">31 uM for 2',3'-cGAMP</KM>
        <text evidence="6">kcat is 2.6 sec(-1) with 2',3'-cGAMP as substrate (PubMed:37890481). kcat is 3.77 sec(-1) with ATP as substrate (PubMed:37890481).</text>
    </kinetics>
    <phDependence>
        <text evidence="3">Optimum pH is 4-6.</text>
    </phDependence>
</comment>
<comment type="subunit">
    <text evidence="4 6">Monomer (PubMed:26783088). Homodimer; homodimerizes following 2',3'-cGAMP-binding (PubMed:37890481).</text>
</comment>
<comment type="subcellular location">
    <subcellularLocation>
        <location evidence="3 5 6">Secreted</location>
    </subcellularLocation>
</comment>
<comment type="alternative products">
    <event type="alternative splicing"/>
    <isoform>
        <id>Q92484-1</id>
        <name>1</name>
        <sequence type="displayed"/>
    </isoform>
    <isoform>
        <id>Q92484-2</id>
        <name>2</name>
        <sequence type="described" ref="VSP_054640"/>
    </isoform>
</comment>
<comment type="tissue specificity">
    <text evidence="3">Detected in blood serum. Detected in macrophages (at protein level).</text>
</comment>
<comment type="induction">
    <text evidence="3 6">Up-regulated in macrophages in response to cholesterol accumulation (PubMed:25288789). Up-regulated by cAMP (PubMed:25288789). Expression is stimulated by LXL lipid metabolism (PubMed:37890481).</text>
</comment>
<comment type="PTM">
    <text evidence="5">N-glycosylation is required for protein maturation, secretion and phosphodiesterase activity.</text>
</comment>
<comment type="similarity">
    <text evidence="9">Belongs to the acid sphingomyelinase family.</text>
</comment>
<accession>Q92484</accession>
<accession>B7Z729</accession>
<accession>Q8WV13</accession>
<gene>
    <name evidence="8 11" type="primary">SMPDL3A</name>
    <name type="synonym">ASML3A</name>
</gene>
<protein>
    <recommendedName>
        <fullName evidence="9">Cyclic GMP-AMP phosphodiesterase SMPDL3A</fullName>
        <shortName evidence="9">2',3'-cGAMP phosphodiesterase SMPDL3A</shortName>
        <ecNumber evidence="6">3.1.4.-</ecNumber>
    </recommendedName>
    <alternativeName>
        <fullName evidence="9">Acid sphingomyelinase-like phosphodiesterase 3a</fullName>
        <shortName evidence="9">ASM-like phosphodiesterase 3a</shortName>
        <ecNumber evidence="3 4">3.6.1.15</ecNumber>
    </alternativeName>
</protein>